<proteinExistence type="inferred from homology"/>
<sequence>MSEAIIAKKAEQVAIVADKMKAAASIVVVDSRGLTVDQDTVLRRNLRESGVEFKVIKNSILSRAAEKAGLEDLKKLFVGPSAVAFSNEDVIAPAKVISEFAKGAEALEIKGGVVDGAITSVEEINALASLPNKEGMLSMLLSVLQAPVRNVAYAVKAVAESKEDGAA</sequence>
<name>RL10_STRTD</name>
<dbReference type="EMBL" id="CP000419">
    <property type="protein sequence ID" value="ABJ65840.1"/>
    <property type="molecule type" value="Genomic_DNA"/>
</dbReference>
<dbReference type="RefSeq" id="WP_011225635.1">
    <property type="nucleotide sequence ID" value="NC_008532.1"/>
</dbReference>
<dbReference type="SMR" id="Q03LT2"/>
<dbReference type="GeneID" id="66898437"/>
<dbReference type="KEGG" id="ste:STER_0567"/>
<dbReference type="HOGENOM" id="CLU_092227_2_0_9"/>
<dbReference type="GO" id="GO:0015934">
    <property type="term" value="C:large ribosomal subunit"/>
    <property type="evidence" value="ECO:0007669"/>
    <property type="project" value="InterPro"/>
</dbReference>
<dbReference type="GO" id="GO:0070180">
    <property type="term" value="F:large ribosomal subunit rRNA binding"/>
    <property type="evidence" value="ECO:0007669"/>
    <property type="project" value="UniProtKB-UniRule"/>
</dbReference>
<dbReference type="GO" id="GO:0003735">
    <property type="term" value="F:structural constituent of ribosome"/>
    <property type="evidence" value="ECO:0007669"/>
    <property type="project" value="InterPro"/>
</dbReference>
<dbReference type="GO" id="GO:0006412">
    <property type="term" value="P:translation"/>
    <property type="evidence" value="ECO:0007669"/>
    <property type="project" value="UniProtKB-UniRule"/>
</dbReference>
<dbReference type="CDD" id="cd05797">
    <property type="entry name" value="Ribosomal_L10"/>
    <property type="match status" value="1"/>
</dbReference>
<dbReference type="FunFam" id="3.30.70.1730:FF:000001">
    <property type="entry name" value="50S ribosomal protein L10"/>
    <property type="match status" value="1"/>
</dbReference>
<dbReference type="Gene3D" id="3.30.70.1730">
    <property type="match status" value="1"/>
</dbReference>
<dbReference type="HAMAP" id="MF_00362">
    <property type="entry name" value="Ribosomal_uL10"/>
    <property type="match status" value="1"/>
</dbReference>
<dbReference type="InterPro" id="IPR001790">
    <property type="entry name" value="Ribosomal_uL10"/>
</dbReference>
<dbReference type="InterPro" id="IPR043141">
    <property type="entry name" value="Ribosomal_uL10-like_sf"/>
</dbReference>
<dbReference type="InterPro" id="IPR022973">
    <property type="entry name" value="Ribosomal_uL10_bac"/>
</dbReference>
<dbReference type="InterPro" id="IPR047865">
    <property type="entry name" value="Ribosomal_uL10_bac_type"/>
</dbReference>
<dbReference type="InterPro" id="IPR002363">
    <property type="entry name" value="Ribosomal_uL10_CS_bac"/>
</dbReference>
<dbReference type="NCBIfam" id="NF000955">
    <property type="entry name" value="PRK00099.1-1"/>
    <property type="match status" value="1"/>
</dbReference>
<dbReference type="PANTHER" id="PTHR11560">
    <property type="entry name" value="39S RIBOSOMAL PROTEIN L10, MITOCHONDRIAL"/>
    <property type="match status" value="1"/>
</dbReference>
<dbReference type="Pfam" id="PF00466">
    <property type="entry name" value="Ribosomal_L10"/>
    <property type="match status" value="1"/>
</dbReference>
<dbReference type="SUPFAM" id="SSF160369">
    <property type="entry name" value="Ribosomal protein L10-like"/>
    <property type="match status" value="1"/>
</dbReference>
<dbReference type="PROSITE" id="PS01109">
    <property type="entry name" value="RIBOSOMAL_L10"/>
    <property type="match status" value="1"/>
</dbReference>
<comment type="function">
    <text evidence="1">Forms part of the ribosomal stalk, playing a central role in the interaction of the ribosome with GTP-bound translation factors.</text>
</comment>
<comment type="subunit">
    <text evidence="1">Part of the ribosomal stalk of the 50S ribosomal subunit. The N-terminus interacts with L11 and the large rRNA to form the base of the stalk. The C-terminus forms an elongated spine to which L12 dimers bind in a sequential fashion forming a multimeric L10(L12)X complex.</text>
</comment>
<comment type="similarity">
    <text evidence="1">Belongs to the universal ribosomal protein uL10 family.</text>
</comment>
<keyword id="KW-0687">Ribonucleoprotein</keyword>
<keyword id="KW-0689">Ribosomal protein</keyword>
<keyword id="KW-0694">RNA-binding</keyword>
<keyword id="KW-0699">rRNA-binding</keyword>
<reference key="1">
    <citation type="journal article" date="2006" name="Proc. Natl. Acad. Sci. U.S.A.">
        <title>Comparative genomics of the lactic acid bacteria.</title>
        <authorList>
            <person name="Makarova K.S."/>
            <person name="Slesarev A."/>
            <person name="Wolf Y.I."/>
            <person name="Sorokin A."/>
            <person name="Mirkin B."/>
            <person name="Koonin E.V."/>
            <person name="Pavlov A."/>
            <person name="Pavlova N."/>
            <person name="Karamychev V."/>
            <person name="Polouchine N."/>
            <person name="Shakhova V."/>
            <person name="Grigoriev I."/>
            <person name="Lou Y."/>
            <person name="Rohksar D."/>
            <person name="Lucas S."/>
            <person name="Huang K."/>
            <person name="Goodstein D.M."/>
            <person name="Hawkins T."/>
            <person name="Plengvidhya V."/>
            <person name="Welker D."/>
            <person name="Hughes J."/>
            <person name="Goh Y."/>
            <person name="Benson A."/>
            <person name="Baldwin K."/>
            <person name="Lee J.-H."/>
            <person name="Diaz-Muniz I."/>
            <person name="Dosti B."/>
            <person name="Smeianov V."/>
            <person name="Wechter W."/>
            <person name="Barabote R."/>
            <person name="Lorca G."/>
            <person name="Altermann E."/>
            <person name="Barrangou R."/>
            <person name="Ganesan B."/>
            <person name="Xie Y."/>
            <person name="Rawsthorne H."/>
            <person name="Tamir D."/>
            <person name="Parker C."/>
            <person name="Breidt F."/>
            <person name="Broadbent J.R."/>
            <person name="Hutkins R."/>
            <person name="O'Sullivan D."/>
            <person name="Steele J."/>
            <person name="Unlu G."/>
            <person name="Saier M.H. Jr."/>
            <person name="Klaenhammer T."/>
            <person name="Richardson P."/>
            <person name="Kozyavkin S."/>
            <person name="Weimer B.C."/>
            <person name="Mills D.A."/>
        </authorList>
    </citation>
    <scope>NUCLEOTIDE SEQUENCE [LARGE SCALE GENOMIC DNA]</scope>
    <source>
        <strain>ATCC BAA-491 / LMD-9</strain>
    </source>
</reference>
<accession>Q03LT2</accession>
<evidence type="ECO:0000255" key="1">
    <source>
        <dbReference type="HAMAP-Rule" id="MF_00362"/>
    </source>
</evidence>
<evidence type="ECO:0000305" key="2"/>
<feature type="chain" id="PRO_1000005607" description="Large ribosomal subunit protein uL10">
    <location>
        <begin position="1"/>
        <end position="167"/>
    </location>
</feature>
<gene>
    <name evidence="1" type="primary">rplJ</name>
    <name type="ordered locus">STER_0567</name>
</gene>
<organism>
    <name type="scientific">Streptococcus thermophilus (strain ATCC BAA-491 / LMD-9)</name>
    <dbReference type="NCBI Taxonomy" id="322159"/>
    <lineage>
        <taxon>Bacteria</taxon>
        <taxon>Bacillati</taxon>
        <taxon>Bacillota</taxon>
        <taxon>Bacilli</taxon>
        <taxon>Lactobacillales</taxon>
        <taxon>Streptococcaceae</taxon>
        <taxon>Streptococcus</taxon>
    </lineage>
</organism>
<protein>
    <recommendedName>
        <fullName evidence="1">Large ribosomal subunit protein uL10</fullName>
    </recommendedName>
    <alternativeName>
        <fullName evidence="2">50S ribosomal protein L10</fullName>
    </alternativeName>
</protein>